<name>VL1_HPV14</name>
<feature type="chain" id="PRO_0000133498" description="Major capsid protein L1">
    <location>
        <begin position="1"/>
        <end position="518"/>
    </location>
</feature>
<feature type="region of interest" description="Disordered" evidence="2">
    <location>
        <begin position="128"/>
        <end position="148"/>
    </location>
</feature>
<feature type="compositionally biased region" description="Polar residues" evidence="2">
    <location>
        <begin position="131"/>
        <end position="142"/>
    </location>
</feature>
<feature type="disulfide bond" description="Interchain (with C-446)" evidence="1">
    <location>
        <position position="177"/>
    </location>
</feature>
<feature type="disulfide bond" description="Interchain (with C-177)" evidence="1">
    <location>
        <position position="446"/>
    </location>
</feature>
<sequence length="518" mass="58905">MAVWQAASGKVYLPPSTPVARVQSTDEYVQRTNIYYHAYSDRLLTVGHPYFNIYDVQSAKIKVPKVSGNQHRVFRLKLPDPNRFALADMSVYNPDKERLVWACRGIEIGRGQPLGVGSVGHPLFNKVGDTENPNSYRQQANSTDDRQNVSFDPKQLQMFIIGCAPCMGEHWDRALPCVEDKPPPGSCPPIELKNTVIEDGDMADIGYGNLNFKALQENRSDVSLDIVNEICKYPDFLKMQNDVYGDSCFFYARREQCYARHFFVRGGKTGDDIPAAQVDEGSLKNVYYIPPMTNQPQNNIGNAMYFPTVSGSLVSSDAQLFNRPFWLQRAQGHNNGICWFNQLFVTVVDNTRNTNFSISVSSENTEVSKIDNYTSQKFQEYLRHVEEYEMSLILQLCKIPLTAEVLAQINAMNSNILEEWQLGFVPAPDNPIHDTYRYIESAATRCPDKNPPKEREDPYKNFNFWNVDLTERLSLDLDQYSLGRKFLFQAGLQQSTVNGTKTVSTRGSIKGIKRKRKN</sequence>
<protein>
    <recommendedName>
        <fullName evidence="1">Major capsid protein L1</fullName>
    </recommendedName>
</protein>
<comment type="function">
    <text evidence="1">Forms an icosahedral capsid with a T=7 symmetry and a 50 nm diameter. The capsid is composed of 72 pentamers linked to each other by disulfide bonds and associated with L2 proteins. Binds to heparan sulfate proteoglycans on cell surface of basal layer keratinocytes to provide initial virion attachment. This binding mediates a conformational change in the virus capsid that facilitates efficient infection. The virion enters the host cell via endocytosis. During virus trafficking, L1 protein dissociates from the viral DNA and the genomic DNA is released to the host nucleus. The virion assembly takes place within the cell nucleus. Encapsulates the genomic DNA together with protein L2.</text>
</comment>
<comment type="subunit">
    <text evidence="1">Self-assembles into homopentamers. The capsid has an icosahedral symmetry and consists of 72 capsomers, with each capsomer being a pentamer of L1. Interacts with the minor capsid protein L2; this interaction is necessary for viral genome encapsidation. Interacts with protein E2; this interaction enhances E2-dependent replication and transcription activation.</text>
</comment>
<comment type="subcellular location">
    <subcellularLocation>
        <location evidence="1">Virion</location>
    </subcellularLocation>
    <subcellularLocation>
        <location evidence="1">Host nucleus</location>
    </subcellularLocation>
</comment>
<comment type="similarity">
    <text evidence="1">Belongs to the papillomaviridae L1 protein family.</text>
</comment>
<proteinExistence type="inferred from homology"/>
<organism>
    <name type="scientific">Human papillomavirus 14</name>
    <dbReference type="NCBI Taxonomy" id="10605"/>
    <lineage>
        <taxon>Viruses</taxon>
        <taxon>Monodnaviria</taxon>
        <taxon>Shotokuvirae</taxon>
        <taxon>Cossaviricota</taxon>
        <taxon>Papovaviricetes</taxon>
        <taxon>Zurhausenvirales</taxon>
        <taxon>Papillomaviridae</taxon>
        <taxon>Firstpapillomavirinae</taxon>
        <taxon>Betapapillomavirus</taxon>
        <taxon>Betapapillomavirus 1</taxon>
    </lineage>
</organism>
<accession>P36734</accession>
<dbReference type="EMBL" id="X74467">
    <property type="protein sequence ID" value="CAA52505.1"/>
    <property type="molecule type" value="Genomic_DNA"/>
</dbReference>
<dbReference type="PIR" id="S36472">
    <property type="entry name" value="S36472"/>
</dbReference>
<dbReference type="SMR" id="P36734"/>
<dbReference type="Proteomes" id="UP000009108">
    <property type="component" value="Segment"/>
</dbReference>
<dbReference type="GO" id="GO:0042025">
    <property type="term" value="C:host cell nucleus"/>
    <property type="evidence" value="ECO:0007669"/>
    <property type="project" value="UniProtKB-SubCell"/>
</dbReference>
<dbReference type="GO" id="GO:0039620">
    <property type="term" value="C:T=7 icosahedral viral capsid"/>
    <property type="evidence" value="ECO:0007669"/>
    <property type="project" value="UniProtKB-UniRule"/>
</dbReference>
<dbReference type="GO" id="GO:0005198">
    <property type="term" value="F:structural molecule activity"/>
    <property type="evidence" value="ECO:0007669"/>
    <property type="project" value="UniProtKB-UniRule"/>
</dbReference>
<dbReference type="GO" id="GO:0075509">
    <property type="term" value="P:endocytosis involved in viral entry into host cell"/>
    <property type="evidence" value="ECO:0007669"/>
    <property type="project" value="UniProtKB-KW"/>
</dbReference>
<dbReference type="GO" id="GO:0019062">
    <property type="term" value="P:virion attachment to host cell"/>
    <property type="evidence" value="ECO:0007669"/>
    <property type="project" value="UniProtKB-UniRule"/>
</dbReference>
<dbReference type="Gene3D" id="2.60.175.20">
    <property type="entry name" value="Major capsid L1 (late) superfamily, Papillomavirus"/>
    <property type="match status" value="2"/>
</dbReference>
<dbReference type="HAMAP" id="MF_04002">
    <property type="entry name" value="PPV_L1"/>
    <property type="match status" value="1"/>
</dbReference>
<dbReference type="InterPro" id="IPR002210">
    <property type="entry name" value="Capsid_L1_Papillomavir"/>
</dbReference>
<dbReference type="InterPro" id="IPR036973">
    <property type="entry name" value="Capsid_L1_sf_Papillomavir"/>
</dbReference>
<dbReference type="InterPro" id="IPR011222">
    <property type="entry name" value="dsDNA_vir_gr_I_capsid"/>
</dbReference>
<dbReference type="Pfam" id="PF00500">
    <property type="entry name" value="Late_protein_L1"/>
    <property type="match status" value="1"/>
</dbReference>
<dbReference type="PRINTS" id="PR00865">
    <property type="entry name" value="HPVCAPSIDL1"/>
</dbReference>
<dbReference type="SUPFAM" id="SSF88648">
    <property type="entry name" value="Group I dsDNA viruses"/>
    <property type="match status" value="1"/>
</dbReference>
<evidence type="ECO:0000255" key="1">
    <source>
        <dbReference type="HAMAP-Rule" id="MF_04002"/>
    </source>
</evidence>
<evidence type="ECO:0000256" key="2">
    <source>
        <dbReference type="SAM" id="MobiDB-lite"/>
    </source>
</evidence>
<organismHost>
    <name type="scientific">Homo sapiens</name>
    <name type="common">Human</name>
    <dbReference type="NCBI Taxonomy" id="9606"/>
</organismHost>
<gene>
    <name evidence="1" type="primary">L1</name>
</gene>
<keyword id="KW-0167">Capsid protein</keyword>
<keyword id="KW-1015">Disulfide bond</keyword>
<keyword id="KW-1048">Host nucleus</keyword>
<keyword id="KW-0945">Host-virus interaction</keyword>
<keyword id="KW-0426">Late protein</keyword>
<keyword id="KW-1145">T=7 icosahedral capsid protein</keyword>
<keyword id="KW-1161">Viral attachment to host cell</keyword>
<keyword id="KW-1162">Viral penetration into host cytoplasm</keyword>
<keyword id="KW-0946">Virion</keyword>
<keyword id="KW-1164">Virus endocytosis by host</keyword>
<keyword id="KW-1160">Virus entry into host cell</keyword>
<reference key="1">
    <citation type="journal article" date="1994" name="Curr. Top. Microbiol. Immunol.">
        <title>Primer-directed sequencing of human papillomavirus types.</title>
        <authorList>
            <person name="Delius H."/>
            <person name="Hofmann B."/>
        </authorList>
    </citation>
    <scope>NUCLEOTIDE SEQUENCE [GENOMIC DNA]</scope>
</reference>